<organism>
    <name type="scientific">Mesobuthus eupeus</name>
    <name type="common">Lesser Asian scorpion</name>
    <name type="synonym">Buthus eupeus</name>
    <dbReference type="NCBI Taxonomy" id="34648"/>
    <lineage>
        <taxon>Eukaryota</taxon>
        <taxon>Metazoa</taxon>
        <taxon>Ecdysozoa</taxon>
        <taxon>Arthropoda</taxon>
        <taxon>Chelicerata</taxon>
        <taxon>Arachnida</taxon>
        <taxon>Scorpiones</taxon>
        <taxon>Buthida</taxon>
        <taxon>Buthoidea</taxon>
        <taxon>Buthidae</taxon>
        <taxon>Mesobuthus</taxon>
    </lineage>
</organism>
<keyword id="KW-0027">Amidation</keyword>
<keyword id="KW-0903">Direct protein sequencing</keyword>
<keyword id="KW-1015">Disulfide bond</keyword>
<keyword id="KW-0872">Ion channel impairing toxin</keyword>
<keyword id="KW-0528">Neurotoxin</keyword>
<keyword id="KW-0632">Potassium channel impairing toxin</keyword>
<keyword id="KW-0964">Secreted</keyword>
<keyword id="KW-0800">Toxin</keyword>
<keyword id="KW-1220">Voltage-gated potassium channel impairing toxin</keyword>
<evidence type="ECO:0000255" key="1"/>
<evidence type="ECO:0000269" key="2">
    <source>
    </source>
</evidence>
<evidence type="ECO:0000303" key="3">
    <source>
    </source>
</evidence>
<evidence type="ECO:0000305" key="4"/>
<evidence type="ECO:0000305" key="5">
    <source>
    </source>
</evidence>
<accession>P86396</accession>
<sequence length="37" mass="3987">VGINVKCKHSGQCLKPCKDAGMRFGKCMNGKCDCTPK</sequence>
<reference key="1">
    <citation type="journal article" date="2010" name="Biochimie">
        <title>A potent potassium channel blocker from Mesobuthus eupeus scorpion venom.</title>
        <authorList>
            <person name="Gao B."/>
            <person name="Peigneur S."/>
            <person name="Tytgat J."/>
            <person name="Zhu S."/>
        </authorList>
    </citation>
    <scope>PROTEIN SEQUENCE</scope>
    <scope>FUNCTION</scope>
    <scope>SUBCELLULAR LOCATION</scope>
    <scope>MASS SPECTROMETRY</scope>
    <scope>DISULFIDE BONDS</scope>
    <scope>AMIDATION AT LYS-37</scope>
    <source>
        <tissue>Venom</tissue>
    </source>
</reference>
<dbReference type="SMR" id="P86396"/>
<dbReference type="GO" id="GO:0005576">
    <property type="term" value="C:extracellular region"/>
    <property type="evidence" value="ECO:0000314"/>
    <property type="project" value="UniProtKB"/>
</dbReference>
<dbReference type="GO" id="GO:0019870">
    <property type="term" value="F:potassium channel inhibitor activity"/>
    <property type="evidence" value="ECO:0000314"/>
    <property type="project" value="UniProtKB"/>
</dbReference>
<dbReference type="GO" id="GO:0090729">
    <property type="term" value="F:toxin activity"/>
    <property type="evidence" value="ECO:0007669"/>
    <property type="project" value="UniProtKB-KW"/>
</dbReference>
<dbReference type="FunFam" id="3.30.30.10:FF:000009">
    <property type="entry name" value="Potassium channel toxin alpha-KTx 4.3"/>
    <property type="match status" value="1"/>
</dbReference>
<dbReference type="Gene3D" id="3.30.30.10">
    <property type="entry name" value="Knottin, scorpion toxin-like"/>
    <property type="match status" value="1"/>
</dbReference>
<dbReference type="InterPro" id="IPR036574">
    <property type="entry name" value="Scorpion_toxin-like_sf"/>
</dbReference>
<dbReference type="InterPro" id="IPR001947">
    <property type="entry name" value="Scorpion_toxinS_K_inh"/>
</dbReference>
<dbReference type="Pfam" id="PF00451">
    <property type="entry name" value="Toxin_2"/>
    <property type="match status" value="1"/>
</dbReference>
<dbReference type="PRINTS" id="PR00286">
    <property type="entry name" value="CHARYBDTOXIN"/>
</dbReference>
<dbReference type="SUPFAM" id="SSF57095">
    <property type="entry name" value="Scorpion toxin-like"/>
    <property type="match status" value="1"/>
</dbReference>
<dbReference type="PROSITE" id="PS01138">
    <property type="entry name" value="SCORP_SHORT_TOXIN"/>
    <property type="match status" value="1"/>
</dbReference>
<protein>
    <recommendedName>
        <fullName>Potassium channel toxin alpha-KTx 3.13</fullName>
    </recommendedName>
    <alternativeName>
        <fullName evidence="3">MeuKTx</fullName>
    </alternativeName>
</protein>
<name>KAX3D_MESEU</name>
<comment type="function">
    <text evidence="2">Blocks voltage-gated potassium channels Kv1.1/KCNA1 (IC(50)=203.15 pM), Kv1.2/KCNA2 (IC(50)=8.92 nM) from rat and human Kv1.3 KCNA3/KCNA3 (IC(50)=171 pM) potently. At 2 uM, also blocks Shaker IR and has a moderate effect on rat Kv1.6/KCNA6.</text>
</comment>
<comment type="subcellular location">
    <subcellularLocation>
        <location evidence="2">Secreted</location>
    </subcellularLocation>
</comment>
<comment type="tissue specificity">
    <text evidence="4">Expressed by the venom gland.</text>
</comment>
<comment type="domain">
    <text evidence="4">Has the structural arrangement of an alpha-helix connected to antiparallel beta-sheets by disulfide bonds (CS-alpha/beta).</text>
</comment>
<comment type="mass spectrometry" mass="3980.8" method="MALDI" evidence="2"/>
<comment type="miscellaneous">
    <text evidence="5">Negative results: has no effect on rat Kv1.4/KCNA4, Kv1.5/KCNA5, Kv4.1/KCND1 or human Kv11.1/KCNH2 and Kv3.1/KCNC1.</text>
</comment>
<comment type="similarity">
    <text evidence="1">Belongs to the short scorpion toxin superfamily. Potassium channel inhibitor family. Alpha-KTx 03 subfamily.</text>
</comment>
<feature type="peptide" id="PRO_0000401114" description="Potassium channel toxin alpha-KTx 3.13" evidence="2">
    <location>
        <begin position="1"/>
        <end position="37"/>
    </location>
</feature>
<feature type="modified residue" description="Lysine amide" evidence="2">
    <location>
        <position position="37"/>
    </location>
</feature>
<feature type="disulfide bond" evidence="2">
    <location>
        <begin position="7"/>
        <end position="27"/>
    </location>
</feature>
<feature type="disulfide bond" evidence="2">
    <location>
        <begin position="13"/>
        <end position="32"/>
    </location>
</feature>
<feature type="disulfide bond" evidence="2">
    <location>
        <begin position="17"/>
        <end position="34"/>
    </location>
</feature>
<proteinExistence type="evidence at protein level"/>